<protein>
    <recommendedName>
        <fullName evidence="1">Small ribosomal subunit protein bS16</fullName>
    </recommendedName>
    <alternativeName>
        <fullName evidence="3">30S ribosomal protein S16</fullName>
    </alternativeName>
</protein>
<dbReference type="EMBL" id="AY198133">
    <property type="protein sequence ID" value="AAP58935.1"/>
    <property type="molecule type" value="Genomic_DNA"/>
</dbReference>
<dbReference type="SMR" id="P62237"/>
<dbReference type="GO" id="GO:0005737">
    <property type="term" value="C:cytoplasm"/>
    <property type="evidence" value="ECO:0007669"/>
    <property type="project" value="UniProtKB-ARBA"/>
</dbReference>
<dbReference type="GO" id="GO:0015935">
    <property type="term" value="C:small ribosomal subunit"/>
    <property type="evidence" value="ECO:0007669"/>
    <property type="project" value="TreeGrafter"/>
</dbReference>
<dbReference type="GO" id="GO:0003735">
    <property type="term" value="F:structural constituent of ribosome"/>
    <property type="evidence" value="ECO:0007669"/>
    <property type="project" value="InterPro"/>
</dbReference>
<dbReference type="GO" id="GO:0006412">
    <property type="term" value="P:translation"/>
    <property type="evidence" value="ECO:0007669"/>
    <property type="project" value="UniProtKB-UniRule"/>
</dbReference>
<dbReference type="Gene3D" id="3.30.1320.10">
    <property type="match status" value="1"/>
</dbReference>
<dbReference type="HAMAP" id="MF_00385">
    <property type="entry name" value="Ribosomal_bS16"/>
    <property type="match status" value="1"/>
</dbReference>
<dbReference type="InterPro" id="IPR000307">
    <property type="entry name" value="Ribosomal_bS16"/>
</dbReference>
<dbReference type="InterPro" id="IPR020592">
    <property type="entry name" value="Ribosomal_bS16_CS"/>
</dbReference>
<dbReference type="InterPro" id="IPR023803">
    <property type="entry name" value="Ribosomal_bS16_dom_sf"/>
</dbReference>
<dbReference type="NCBIfam" id="TIGR00002">
    <property type="entry name" value="S16"/>
    <property type="match status" value="1"/>
</dbReference>
<dbReference type="PANTHER" id="PTHR12919">
    <property type="entry name" value="30S RIBOSOMAL PROTEIN S16"/>
    <property type="match status" value="1"/>
</dbReference>
<dbReference type="PANTHER" id="PTHR12919:SF20">
    <property type="entry name" value="SMALL RIBOSOMAL SUBUNIT PROTEIN BS16M"/>
    <property type="match status" value="1"/>
</dbReference>
<dbReference type="Pfam" id="PF00886">
    <property type="entry name" value="Ribosomal_S16"/>
    <property type="match status" value="1"/>
</dbReference>
<dbReference type="SUPFAM" id="SSF54565">
    <property type="entry name" value="Ribosomal protein S16"/>
    <property type="match status" value="1"/>
</dbReference>
<dbReference type="PROSITE" id="PS00732">
    <property type="entry name" value="RIBOSOMAL_S16"/>
    <property type="match status" value="1"/>
</dbReference>
<name>RS16_SPIKU</name>
<proteinExistence type="inferred from homology"/>
<gene>
    <name evidence="1" type="primary">rpsP</name>
</gene>
<comment type="similarity">
    <text evidence="1">Belongs to the bacterial ribosomal protein bS16 family.</text>
</comment>
<sequence>MVKLRLKRIGKKKAAFYRIVATDARVKRDGEYIELIGTYNPINGYVKINYDLAYKWLLTGAQPTDTVRNLLSKEGLMNKLHNEKYVAKTTKSTKEKAATDKKAKVTKKPKTKTTTDVKK</sequence>
<feature type="chain" id="PRO_0000167240" description="Small ribosomal subunit protein bS16">
    <location>
        <begin position="1"/>
        <end position="119"/>
    </location>
</feature>
<feature type="region of interest" description="Disordered" evidence="2">
    <location>
        <begin position="89"/>
        <end position="119"/>
    </location>
</feature>
<feature type="compositionally biased region" description="Basic and acidic residues" evidence="2">
    <location>
        <begin position="89"/>
        <end position="103"/>
    </location>
</feature>
<keyword id="KW-0687">Ribonucleoprotein</keyword>
<keyword id="KW-0689">Ribosomal protein</keyword>
<reference key="1">
    <citation type="journal article" date="2003" name="Mol. Genet. Genomics">
        <title>Gene content and organization of an 85-kb DNA segment from the genome of the phytopathogenic mollicute Spiroplasma kunkelii.</title>
        <authorList>
            <person name="Zhao Y."/>
            <person name="Hammond R.W."/>
            <person name="Jomantiene R."/>
            <person name="Dally E.L."/>
            <person name="Lee I.-M."/>
            <person name="Jia H."/>
            <person name="Wu H."/>
            <person name="Lin S."/>
            <person name="Zhang P."/>
            <person name="Kenton S."/>
            <person name="Najar F.Z."/>
            <person name="Hua A."/>
            <person name="Roe B.A."/>
            <person name="Fletcher J."/>
            <person name="Davis R.E."/>
        </authorList>
    </citation>
    <scope>NUCLEOTIDE SEQUENCE [GENOMIC DNA]</scope>
    <source>
        <strain>CR2-3x</strain>
    </source>
</reference>
<accession>P62237</accession>
<organism>
    <name type="scientific">Spiroplasma kunkelii</name>
    <dbReference type="NCBI Taxonomy" id="47834"/>
    <lineage>
        <taxon>Bacteria</taxon>
        <taxon>Bacillati</taxon>
        <taxon>Mycoplasmatota</taxon>
        <taxon>Mollicutes</taxon>
        <taxon>Entomoplasmatales</taxon>
        <taxon>Spiroplasmataceae</taxon>
        <taxon>Spiroplasma</taxon>
    </lineage>
</organism>
<evidence type="ECO:0000255" key="1">
    <source>
        <dbReference type="HAMAP-Rule" id="MF_00385"/>
    </source>
</evidence>
<evidence type="ECO:0000256" key="2">
    <source>
        <dbReference type="SAM" id="MobiDB-lite"/>
    </source>
</evidence>
<evidence type="ECO:0000305" key="3"/>